<proteinExistence type="inferred from homology"/>
<dbReference type="EMBL" id="BX640451">
    <property type="protein sequence ID" value="CAE34973.1"/>
    <property type="molecule type" value="Genomic_DNA"/>
</dbReference>
<dbReference type="RefSeq" id="WP_003815364.1">
    <property type="nucleotide sequence ID" value="NC_002927.3"/>
</dbReference>
<dbReference type="SMR" id="Q7WEM3"/>
<dbReference type="GeneID" id="93205937"/>
<dbReference type="KEGG" id="bbr:BB4611"/>
<dbReference type="eggNOG" id="COG0356">
    <property type="taxonomic scope" value="Bacteria"/>
</dbReference>
<dbReference type="HOGENOM" id="CLU_041018_1_0_4"/>
<dbReference type="Proteomes" id="UP000001027">
    <property type="component" value="Chromosome"/>
</dbReference>
<dbReference type="GO" id="GO:0005886">
    <property type="term" value="C:plasma membrane"/>
    <property type="evidence" value="ECO:0007669"/>
    <property type="project" value="UniProtKB-SubCell"/>
</dbReference>
<dbReference type="GO" id="GO:0045259">
    <property type="term" value="C:proton-transporting ATP synthase complex"/>
    <property type="evidence" value="ECO:0007669"/>
    <property type="project" value="UniProtKB-KW"/>
</dbReference>
<dbReference type="GO" id="GO:0046933">
    <property type="term" value="F:proton-transporting ATP synthase activity, rotational mechanism"/>
    <property type="evidence" value="ECO:0007669"/>
    <property type="project" value="UniProtKB-UniRule"/>
</dbReference>
<dbReference type="GO" id="GO:0042777">
    <property type="term" value="P:proton motive force-driven plasma membrane ATP synthesis"/>
    <property type="evidence" value="ECO:0007669"/>
    <property type="project" value="TreeGrafter"/>
</dbReference>
<dbReference type="CDD" id="cd00310">
    <property type="entry name" value="ATP-synt_Fo_a_6"/>
    <property type="match status" value="1"/>
</dbReference>
<dbReference type="FunFam" id="1.20.120.220:FF:000002">
    <property type="entry name" value="ATP synthase subunit a"/>
    <property type="match status" value="1"/>
</dbReference>
<dbReference type="Gene3D" id="1.20.120.220">
    <property type="entry name" value="ATP synthase, F0 complex, subunit A"/>
    <property type="match status" value="1"/>
</dbReference>
<dbReference type="HAMAP" id="MF_01393">
    <property type="entry name" value="ATP_synth_a_bact"/>
    <property type="match status" value="1"/>
</dbReference>
<dbReference type="InterPro" id="IPR045082">
    <property type="entry name" value="ATP_syn_F0_a_bact/chloroplast"/>
</dbReference>
<dbReference type="InterPro" id="IPR000568">
    <property type="entry name" value="ATP_synth_F0_asu"/>
</dbReference>
<dbReference type="InterPro" id="IPR023011">
    <property type="entry name" value="ATP_synth_F0_asu_AS"/>
</dbReference>
<dbReference type="InterPro" id="IPR035908">
    <property type="entry name" value="F0_ATP_A_sf"/>
</dbReference>
<dbReference type="NCBIfam" id="TIGR01131">
    <property type="entry name" value="ATP_synt_6_or_A"/>
    <property type="match status" value="1"/>
</dbReference>
<dbReference type="NCBIfam" id="NF004477">
    <property type="entry name" value="PRK05815.1-1"/>
    <property type="match status" value="1"/>
</dbReference>
<dbReference type="PANTHER" id="PTHR42823">
    <property type="entry name" value="ATP SYNTHASE SUBUNIT A, CHLOROPLASTIC"/>
    <property type="match status" value="1"/>
</dbReference>
<dbReference type="PANTHER" id="PTHR42823:SF3">
    <property type="entry name" value="ATP SYNTHASE SUBUNIT A, CHLOROPLASTIC"/>
    <property type="match status" value="1"/>
</dbReference>
<dbReference type="Pfam" id="PF00119">
    <property type="entry name" value="ATP-synt_A"/>
    <property type="match status" value="1"/>
</dbReference>
<dbReference type="SUPFAM" id="SSF81336">
    <property type="entry name" value="F1F0 ATP synthase subunit A"/>
    <property type="match status" value="1"/>
</dbReference>
<dbReference type="PROSITE" id="PS00449">
    <property type="entry name" value="ATPASE_A"/>
    <property type="match status" value="1"/>
</dbReference>
<name>ATP6_BORBR</name>
<organism>
    <name type="scientific">Bordetella bronchiseptica (strain ATCC BAA-588 / NCTC 13252 / RB50)</name>
    <name type="common">Alcaligenes bronchisepticus</name>
    <dbReference type="NCBI Taxonomy" id="257310"/>
    <lineage>
        <taxon>Bacteria</taxon>
        <taxon>Pseudomonadati</taxon>
        <taxon>Pseudomonadota</taxon>
        <taxon>Betaproteobacteria</taxon>
        <taxon>Burkholderiales</taxon>
        <taxon>Alcaligenaceae</taxon>
        <taxon>Bordetella</taxon>
    </lineage>
</organism>
<keyword id="KW-0066">ATP synthesis</keyword>
<keyword id="KW-0997">Cell inner membrane</keyword>
<keyword id="KW-1003">Cell membrane</keyword>
<keyword id="KW-0138">CF(0)</keyword>
<keyword id="KW-0375">Hydrogen ion transport</keyword>
<keyword id="KW-0406">Ion transport</keyword>
<keyword id="KW-0472">Membrane</keyword>
<keyword id="KW-0812">Transmembrane</keyword>
<keyword id="KW-1133">Transmembrane helix</keyword>
<keyword id="KW-0813">Transport</keyword>
<sequence>MAAPSGASPQSEYIQHHLVHLNNIGEKQSVIAQFNVINYDSLFWSILMGLLVVFCLWLAARRATAGVPGRFQGFIEMIVDMVDDQAKSIVTNAKSRLFVAPLALTVFLWIILMNALDLLPVDLLPSIWRMTGLGAEHGDPLYYHRILPTADLNVPMGMSLGVLLLMFYYGIKIKHPGGFVKELFTAPFHAHGLASLVLAPFNLLLNLIEYAAKSVSLGMRLFGNMFAGELIFMLIALLGGAWTGFNGASIGLGIGHVLAGSVWAIFHILIVLLQAFIFMMLTLVYIGQAHEGH</sequence>
<gene>
    <name evidence="1" type="primary">atpB</name>
    <name type="ordered locus">BB4611</name>
</gene>
<comment type="function">
    <text evidence="1">Key component of the proton channel; it plays a direct role in the translocation of protons across the membrane.</text>
</comment>
<comment type="subunit">
    <text evidence="1">F-type ATPases have 2 components, CF(1) - the catalytic core - and CF(0) - the membrane proton channel. CF(1) has five subunits: alpha(3), beta(3), gamma(1), delta(1), epsilon(1). CF(0) has three main subunits: a(1), b(2) and c(9-12). The alpha and beta chains form an alternating ring which encloses part of the gamma chain. CF(1) is attached to CF(0) by a central stalk formed by the gamma and epsilon chains, while a peripheral stalk is formed by the delta and b chains.</text>
</comment>
<comment type="subcellular location">
    <subcellularLocation>
        <location evidence="1">Cell inner membrane</location>
        <topology evidence="1">Multi-pass membrane protein</topology>
    </subcellularLocation>
</comment>
<comment type="similarity">
    <text evidence="1">Belongs to the ATPase A chain family.</text>
</comment>
<feature type="chain" id="PRO_1000145262" description="ATP synthase subunit a">
    <location>
        <begin position="1"/>
        <end position="293"/>
    </location>
</feature>
<feature type="transmembrane region" description="Helical" evidence="1">
    <location>
        <begin position="40"/>
        <end position="60"/>
    </location>
</feature>
<feature type="transmembrane region" description="Helical" evidence="1">
    <location>
        <begin position="97"/>
        <end position="117"/>
    </location>
</feature>
<feature type="transmembrane region" description="Helical" evidence="1">
    <location>
        <begin position="151"/>
        <end position="171"/>
    </location>
</feature>
<feature type="transmembrane region" description="Helical" evidence="1">
    <location>
        <begin position="188"/>
        <end position="208"/>
    </location>
</feature>
<feature type="transmembrane region" description="Helical" evidence="1">
    <location>
        <begin position="225"/>
        <end position="245"/>
    </location>
</feature>
<feature type="transmembrane region" description="Helical" evidence="1">
    <location>
        <begin position="264"/>
        <end position="284"/>
    </location>
</feature>
<protein>
    <recommendedName>
        <fullName evidence="1">ATP synthase subunit a</fullName>
    </recommendedName>
    <alternativeName>
        <fullName evidence="1">ATP synthase F0 sector subunit a</fullName>
    </alternativeName>
    <alternativeName>
        <fullName evidence="1">F-ATPase subunit 6</fullName>
    </alternativeName>
</protein>
<accession>Q7WEM3</accession>
<reference key="1">
    <citation type="journal article" date="2003" name="Nat. Genet.">
        <title>Comparative analysis of the genome sequences of Bordetella pertussis, Bordetella parapertussis and Bordetella bronchiseptica.</title>
        <authorList>
            <person name="Parkhill J."/>
            <person name="Sebaihia M."/>
            <person name="Preston A."/>
            <person name="Murphy L.D."/>
            <person name="Thomson N.R."/>
            <person name="Harris D.E."/>
            <person name="Holden M.T.G."/>
            <person name="Churcher C.M."/>
            <person name="Bentley S.D."/>
            <person name="Mungall K.L."/>
            <person name="Cerdeno-Tarraga A.-M."/>
            <person name="Temple L."/>
            <person name="James K.D."/>
            <person name="Harris B."/>
            <person name="Quail M.A."/>
            <person name="Achtman M."/>
            <person name="Atkin R."/>
            <person name="Baker S."/>
            <person name="Basham D."/>
            <person name="Bason N."/>
            <person name="Cherevach I."/>
            <person name="Chillingworth T."/>
            <person name="Collins M."/>
            <person name="Cronin A."/>
            <person name="Davis P."/>
            <person name="Doggett J."/>
            <person name="Feltwell T."/>
            <person name="Goble A."/>
            <person name="Hamlin N."/>
            <person name="Hauser H."/>
            <person name="Holroyd S."/>
            <person name="Jagels K."/>
            <person name="Leather S."/>
            <person name="Moule S."/>
            <person name="Norberczak H."/>
            <person name="O'Neil S."/>
            <person name="Ormond D."/>
            <person name="Price C."/>
            <person name="Rabbinowitsch E."/>
            <person name="Rutter S."/>
            <person name="Sanders M."/>
            <person name="Saunders D."/>
            <person name="Seeger K."/>
            <person name="Sharp S."/>
            <person name="Simmonds M."/>
            <person name="Skelton J."/>
            <person name="Squares R."/>
            <person name="Squares S."/>
            <person name="Stevens K."/>
            <person name="Unwin L."/>
            <person name="Whitehead S."/>
            <person name="Barrell B.G."/>
            <person name="Maskell D.J."/>
        </authorList>
    </citation>
    <scope>NUCLEOTIDE SEQUENCE [LARGE SCALE GENOMIC DNA]</scope>
    <source>
        <strain>ATCC BAA-588 / NCTC 13252 / RB50</strain>
    </source>
</reference>
<evidence type="ECO:0000255" key="1">
    <source>
        <dbReference type="HAMAP-Rule" id="MF_01393"/>
    </source>
</evidence>